<accession>P32440</accession>
<accession>D9PY07</accession>
<feature type="chain" id="PRO_0000218512" description="5,10-methenyltetrahydromethanopterin hydrogenase">
    <location>
        <begin position="1"/>
        <end position="344"/>
    </location>
</feature>
<feature type="sequence conflict" description="In Ref. 1; CAA42121." evidence="6" ref="1">
    <original>DD</original>
    <variation>EH</variation>
    <location>
        <begin position="74"/>
        <end position="75"/>
    </location>
</feature>
<feature type="sequence conflict" description="In Ref. 1; CAA42121." evidence="6" ref="1">
    <original>K</original>
    <variation>N</variation>
    <location>
        <position position="91"/>
    </location>
</feature>
<feature type="sequence conflict" description="In Ref. 1; CAA42121." evidence="6" ref="1">
    <original>I</original>
    <variation>M</variation>
    <location>
        <position position="261"/>
    </location>
</feature>
<feature type="sequence conflict" description="In Ref. 1; CAA42121." evidence="6" ref="1">
    <original>G</original>
    <variation>C</variation>
    <location>
        <position position="265"/>
    </location>
</feature>
<feature type="sequence conflict" description="In Ref. 1; CAA42121." evidence="6" ref="1">
    <original>ID</original>
    <variation>RY</variation>
    <location>
        <begin position="304"/>
        <end position="305"/>
    </location>
</feature>
<feature type="strand" evidence="8">
    <location>
        <begin position="2"/>
        <end position="6"/>
    </location>
</feature>
<feature type="helix" evidence="8">
    <location>
        <begin position="12"/>
        <end position="17"/>
    </location>
</feature>
<feature type="helix" evidence="8">
    <location>
        <begin position="23"/>
        <end position="32"/>
    </location>
</feature>
<feature type="helix" evidence="8">
    <location>
        <begin position="35"/>
        <end position="39"/>
    </location>
</feature>
<feature type="helix" evidence="8">
    <location>
        <begin position="42"/>
        <end position="53"/>
    </location>
</feature>
<feature type="strand" evidence="8">
    <location>
        <begin position="58"/>
        <end position="62"/>
    </location>
</feature>
<feature type="helix" evidence="8">
    <location>
        <begin position="64"/>
        <end position="67"/>
    </location>
</feature>
<feature type="strand" evidence="8">
    <location>
        <begin position="69"/>
        <end position="72"/>
    </location>
</feature>
<feature type="helix" evidence="8">
    <location>
        <begin position="78"/>
        <end position="87"/>
    </location>
</feature>
<feature type="helix" evidence="8">
    <location>
        <begin position="89"/>
        <end position="91"/>
    </location>
</feature>
<feature type="helix" evidence="8">
    <location>
        <begin position="93"/>
        <end position="106"/>
    </location>
</feature>
<feature type="turn" evidence="8">
    <location>
        <begin position="110"/>
        <end position="112"/>
    </location>
</feature>
<feature type="strand" evidence="8">
    <location>
        <begin position="113"/>
        <end position="118"/>
    </location>
</feature>
<feature type="helix" evidence="8">
    <location>
        <begin position="120"/>
        <end position="123"/>
    </location>
</feature>
<feature type="strand" evidence="8">
    <location>
        <begin position="126"/>
        <end position="129"/>
    </location>
</feature>
<feature type="helix" evidence="8">
    <location>
        <begin position="131"/>
        <end position="135"/>
    </location>
</feature>
<feature type="strand" evidence="8">
    <location>
        <begin position="139"/>
        <end position="143"/>
    </location>
</feature>
<feature type="helix" evidence="8">
    <location>
        <begin position="148"/>
        <end position="150"/>
    </location>
</feature>
<feature type="helix" evidence="8">
    <location>
        <begin position="151"/>
        <end position="155"/>
    </location>
</feature>
<feature type="turn" evidence="8">
    <location>
        <begin position="156"/>
        <end position="158"/>
    </location>
</feature>
<feature type="helix" evidence="8">
    <location>
        <begin position="159"/>
        <end position="161"/>
    </location>
</feature>
<feature type="strand" evidence="8">
    <location>
        <begin position="167"/>
        <end position="169"/>
    </location>
</feature>
<feature type="helix" evidence="8">
    <location>
        <begin position="176"/>
        <end position="183"/>
    </location>
</feature>
<feature type="turn" evidence="7">
    <location>
        <begin position="186"/>
        <end position="188"/>
    </location>
</feature>
<feature type="turn" evidence="7">
    <location>
        <begin position="190"/>
        <end position="192"/>
    </location>
</feature>
<feature type="helix" evidence="7">
    <location>
        <begin position="194"/>
        <end position="196"/>
    </location>
</feature>
<feature type="strand" evidence="8">
    <location>
        <begin position="198"/>
        <end position="200"/>
    </location>
</feature>
<feature type="turn" evidence="8">
    <location>
        <begin position="208"/>
        <end position="210"/>
    </location>
</feature>
<feature type="strand" evidence="8">
    <location>
        <begin position="215"/>
        <end position="221"/>
    </location>
</feature>
<feature type="helix" evidence="8">
    <location>
        <begin position="223"/>
        <end position="237"/>
    </location>
</feature>
<feature type="strand" evidence="8">
    <location>
        <begin position="241"/>
        <end position="244"/>
    </location>
</feature>
<feature type="helix" evidence="8">
    <location>
        <begin position="245"/>
        <end position="247"/>
    </location>
</feature>
<feature type="helix" evidence="8">
    <location>
        <begin position="249"/>
        <end position="251"/>
    </location>
</feature>
<feature type="turn" evidence="8">
    <location>
        <begin position="253"/>
        <end position="255"/>
    </location>
</feature>
<feature type="helix" evidence="8">
    <location>
        <begin position="256"/>
        <end position="275"/>
    </location>
</feature>
<feature type="helix" evidence="8">
    <location>
        <begin position="281"/>
        <end position="302"/>
    </location>
</feature>
<feature type="helix" evidence="8">
    <location>
        <begin position="304"/>
        <end position="309"/>
    </location>
</feature>
<feature type="helix" evidence="8">
    <location>
        <begin position="313"/>
        <end position="316"/>
    </location>
</feature>
<feature type="helix" evidence="8">
    <location>
        <begin position="317"/>
        <end position="320"/>
    </location>
</feature>
<feature type="helix" evidence="8">
    <location>
        <begin position="321"/>
        <end position="323"/>
    </location>
</feature>
<feature type="helix" evidence="8">
    <location>
        <begin position="328"/>
        <end position="342"/>
    </location>
</feature>
<keyword id="KW-0002">3D-structure</keyword>
<keyword id="KW-0484">Methanogenesis</keyword>
<keyword id="KW-0554">One-carbon metabolism</keyword>
<keyword id="KW-0560">Oxidoreductase</keyword>
<gene>
    <name evidence="5" type="primary">hmd</name>
    <name type="ordered locus">MTBMA_c15260</name>
</gene>
<comment type="function">
    <text evidence="3">Catalyzes the reversible reduction of methenyl-H(4)MPT(+) to methylene-H(4)MPT.</text>
</comment>
<comment type="catalytic activity">
    <reaction evidence="2 3">
        <text>5,10-methenyl-5,6,7,8-tetrahydromethanopterin + H2 = 5,10-methylenetetrahydromethanopterin + H(+)</text>
        <dbReference type="Rhea" id="RHEA:20017"/>
        <dbReference type="ChEBI" id="CHEBI:15378"/>
        <dbReference type="ChEBI" id="CHEBI:18276"/>
        <dbReference type="ChEBI" id="CHEBI:57818"/>
        <dbReference type="ChEBI" id="CHEBI:58337"/>
        <dbReference type="EC" id="1.12.98.2"/>
    </reaction>
    <physiologicalReaction direction="left-to-right" evidence="2">
        <dbReference type="Rhea" id="RHEA:20018"/>
    </physiologicalReaction>
    <physiologicalReaction direction="right-to-left" evidence="2">
        <dbReference type="Rhea" id="RHEA:20019"/>
    </physiologicalReaction>
</comment>
<comment type="activity regulation">
    <text evidence="2 3">Activity requires salt; 100 mM sodium or potassium salts of chloride, phosphate or sulfate are equally effective. Inactivated by O(2).</text>
</comment>
<comment type="biophysicochemical properties">
    <kinetics>
        <KM evidence="3">20 uM for 5,10-methylenetetrahydromethanopterin</KM>
        <KM evidence="2">40 uM for 5,10-methylenetetrahydromethanopterin</KM>
        <KM evidence="2">50 uM for 5,10-methenyl-5,6,7,8-tetrahydromethanopterin</KM>
    </kinetics>
    <phDependence>
        <text evidence="2 3">Optimum pH is 6.0-6.5 when making H(2) and 7.5 in the other direction.</text>
    </phDependence>
    <temperatureDependence>
        <text evidence="2 3">Optimum temperature is 60 degrees Celsius.</text>
    </temperatureDependence>
</comment>
<comment type="pathway">
    <text evidence="2 3">One-carbon metabolism; methanogenesis from CO(2); 5,10-methylene-5,6,7,8-tetrahydromethanopterin from 5,10-methenyl-5,6,7,8-tetrahydromethanopterin (hydrogen route): step 1/1.</text>
</comment>
<comment type="subunit">
    <text evidence="1">Homotetramer.</text>
</comment>
<comment type="similarity">
    <text evidence="6">Belongs to the HMD family.</text>
</comment>
<protein>
    <recommendedName>
        <fullName>5,10-methenyltetrahydromethanopterin hydrogenase</fullName>
        <ecNumber evidence="3">1.12.98.2</ecNumber>
    </recommendedName>
    <alternativeName>
        <fullName>H(2)-dependent methylene-H(4)MPT dehydrogenase</fullName>
    </alternativeName>
    <alternativeName>
        <fullName evidence="4">H(2)-forming N(5),N(10)-methylenetetrahydromethanopterin dehydrogenase</fullName>
    </alternativeName>
    <alternativeName>
        <fullName>N(5),N(10)-methenyltetrahydromethanopterin hydrogenase</fullName>
    </alternativeName>
</protein>
<sequence length="344" mass="37654">MKLAILGAGCYRTHAASGITNFSRACEVAEMVGKPEIAMTHSTITMGAELKELAGVDEVVVADPVFDNQFTVIDDFAYEDVIEAHKEDPEKIMPQIREKVNEVAKELPKPPEGAIHFTHPEDLGFEITTDDREAVADADFIMTWFPKGDMQPDIINKFIDDIKPGAIVTHACTIPTTKFYKIFEQKHGDLVTKPETLNVTSYHPGAVPEMKGQVYIAEGYASEDAIETLFELGQKARGNAYRLPAELLGPVCDMCSALTAITYAGILSYRDSVTQVLGAPASFAQMMAKESLEQITALMEKVGIDKMEENLDPGALLGTADSMNFGASAEILPTVFEILEKRKK</sequence>
<organism>
    <name type="scientific">Methanothermobacter marburgensis (strain ATCC BAA-927 / DSM 2133 / JCM 14651 / NBRC 100331 / OCM 82 / Marburg)</name>
    <name type="common">Methanobacterium thermoautotrophicum</name>
    <dbReference type="NCBI Taxonomy" id="79929"/>
    <lineage>
        <taxon>Archaea</taxon>
        <taxon>Methanobacteriati</taxon>
        <taxon>Methanobacteriota</taxon>
        <taxon>Methanomada group</taxon>
        <taxon>Methanobacteria</taxon>
        <taxon>Methanobacteriales</taxon>
        <taxon>Methanobacteriaceae</taxon>
        <taxon>Methanothermobacter</taxon>
    </lineage>
</organism>
<reference key="1">
    <citation type="journal article" date="1991" name="Eur. J. Biochem.">
        <title>Hydrogen-forming and coenzyme-F420-reducing methylene tetrahydromethanopterin dehydrogenase are genetically distinct enzymes in Methanobacterium thermoautotrophicum (Marburg).</title>
        <authorList>
            <person name="Von Buenau R."/>
            <person name="Zirngibl C."/>
            <person name="Thauer R.K."/>
            <person name="Klein A."/>
        </authorList>
    </citation>
    <scope>NUCLEOTIDE SEQUENCE [GENOMIC DNA]</scope>
    <scope>FUNCTION</scope>
    <scope>CATALYTIC ACTIVITY</scope>
    <scope>ACTIVITY REGULATION</scope>
    <scope>BIOPHYSICOCHEMICAL PROPERTIES</scope>
    <scope>PATHWAY</scope>
    <source>
        <strain>ATCC BAA-927 / DSM 2133 / JCM 14651 / NBRC 100331 / OCM 82 / Marburg</strain>
    </source>
</reference>
<reference key="2">
    <citation type="journal article" date="2010" name="J. Bacteriol.">
        <title>Complete genome sequence of Methanothermobacter marburgensis, a methanoarchaeon model organism.</title>
        <authorList>
            <person name="Liesegang H."/>
            <person name="Kaster A.K."/>
            <person name="Wiezer A."/>
            <person name="Goenrich M."/>
            <person name="Wollherr A."/>
            <person name="Seedorf H."/>
            <person name="Gottschalk G."/>
            <person name="Thauer R.K."/>
        </authorList>
    </citation>
    <scope>NUCLEOTIDE SEQUENCE [LARGE SCALE GENOMIC DNA]</scope>
    <source>
        <strain>ATCC BAA-927 / DSM 2133 / JCM 14651 / NBRC 100331 / OCM 82 / Marburg</strain>
    </source>
</reference>
<reference key="3">
    <citation type="journal article" date="1992" name="Eur. J. Biochem.">
        <title>H2-forming methylenetetrahydromethanopterin dehydrogenase, a novel type of hydrogenase without iron-sulfur clusters in methanogenic archaea.</title>
        <authorList>
            <person name="Zirngibl C."/>
            <person name="van Dongen W."/>
            <person name="Schwoerer B."/>
            <person name="von Buenau R."/>
            <person name="Richter M."/>
            <person name="Klein A."/>
            <person name="Thauer R.K."/>
        </authorList>
    </citation>
    <scope>FUNCTION</scope>
    <scope>CATALYTIC ACTIVITY</scope>
    <scope>ACTIVITY REGULATION</scope>
    <scope>BIOPHYSICOCHEMICAL PROPERTIES</scope>
    <source>
        <strain>ATCC BAA-927 / DSM 2133 / JCM 14651 / NBRC 100331 / OCM 82 / Marburg</strain>
    </source>
</reference>
<dbReference type="EC" id="1.12.98.2" evidence="3"/>
<dbReference type="EMBL" id="X59547">
    <property type="protein sequence ID" value="CAA42121.1"/>
    <property type="molecule type" value="Genomic_DNA"/>
</dbReference>
<dbReference type="EMBL" id="CP001710">
    <property type="protein sequence ID" value="ADL59105.1"/>
    <property type="molecule type" value="Genomic_DNA"/>
</dbReference>
<dbReference type="PIR" id="S19705">
    <property type="entry name" value="S19705"/>
</dbReference>
<dbReference type="RefSeq" id="WP_013296316.1">
    <property type="nucleotide sequence ID" value="NC_014408.1"/>
</dbReference>
<dbReference type="PDB" id="4JJF">
    <property type="method" value="X-ray"/>
    <property type="resolution" value="2.20 A"/>
    <property type="chains" value="A/B=1-344"/>
</dbReference>
<dbReference type="PDB" id="4JJG">
    <property type="method" value="X-ray"/>
    <property type="resolution" value="2.50 A"/>
    <property type="chains" value="A/B=1-344"/>
</dbReference>
<dbReference type="PDB" id="5OK4">
    <property type="method" value="X-ray"/>
    <property type="resolution" value="1.29 A"/>
    <property type="chains" value="A=1-344"/>
</dbReference>
<dbReference type="PDB" id="6GGU">
    <property type="method" value="X-ray"/>
    <property type="resolution" value="2.60 A"/>
    <property type="chains" value="A=1-344"/>
</dbReference>
<dbReference type="PDBsum" id="4JJF"/>
<dbReference type="PDBsum" id="4JJG"/>
<dbReference type="PDBsum" id="5OK4"/>
<dbReference type="PDBsum" id="6GGU"/>
<dbReference type="SMR" id="P32440"/>
<dbReference type="STRING" id="79929.MTBMA_c15260"/>
<dbReference type="PaxDb" id="79929-MTBMA_c15260"/>
<dbReference type="GeneID" id="77400297"/>
<dbReference type="GeneID" id="9705235"/>
<dbReference type="KEGG" id="mmg:MTBMA_c15260"/>
<dbReference type="PATRIC" id="fig|79929.8.peg.1479"/>
<dbReference type="HOGENOM" id="CLU_772960_0_0_2"/>
<dbReference type="OrthoDB" id="113982at2157"/>
<dbReference type="BRENDA" id="1.12.98.2">
    <property type="organism ID" value="7427"/>
</dbReference>
<dbReference type="UniPathway" id="UPA00640">
    <property type="reaction ID" value="UER00696"/>
</dbReference>
<dbReference type="EvolutionaryTrace" id="P32440"/>
<dbReference type="Proteomes" id="UP000000345">
    <property type="component" value="Chromosome"/>
</dbReference>
<dbReference type="GO" id="GO:0047068">
    <property type="term" value="F:N5,N10-methenyltetrahydromethanopterin hydrogenase activity"/>
    <property type="evidence" value="ECO:0000314"/>
    <property type="project" value="MENGO"/>
</dbReference>
<dbReference type="GO" id="GO:0019386">
    <property type="term" value="P:methanogenesis, from carbon dioxide"/>
    <property type="evidence" value="ECO:0007669"/>
    <property type="project" value="UniProtKB-UniRule"/>
</dbReference>
<dbReference type="GO" id="GO:0006730">
    <property type="term" value="P:one-carbon metabolic process"/>
    <property type="evidence" value="ECO:0007669"/>
    <property type="project" value="UniProtKB-UniRule"/>
</dbReference>
<dbReference type="FunFam" id="1.20.120.1300:FF:000001">
    <property type="entry name" value="5,10-methenyltetrahydromethanopterin hydrogenase"/>
    <property type="match status" value="1"/>
</dbReference>
<dbReference type="FunFam" id="3.40.50.720:FF:001042">
    <property type="entry name" value="5,10-methenyltetrahydromethanopterin hydrogenase"/>
    <property type="match status" value="1"/>
</dbReference>
<dbReference type="Gene3D" id="1.20.120.1300">
    <property type="entry name" value="Hmd, C-terminal helical subdomain"/>
    <property type="match status" value="1"/>
</dbReference>
<dbReference type="Gene3D" id="3.40.50.720">
    <property type="entry name" value="NAD(P)-binding Rossmann-like Domain"/>
    <property type="match status" value="1"/>
</dbReference>
<dbReference type="HAMAP" id="MF_01090">
    <property type="entry name" value="HMD"/>
    <property type="match status" value="1"/>
</dbReference>
<dbReference type="InterPro" id="IPR008927">
    <property type="entry name" value="6-PGluconate_DH-like_C_sf"/>
</dbReference>
<dbReference type="InterPro" id="IPR010062">
    <property type="entry name" value="HMD"/>
</dbReference>
<dbReference type="InterPro" id="IPR004889">
    <property type="entry name" value="HMD_C"/>
</dbReference>
<dbReference type="InterPro" id="IPR038182">
    <property type="entry name" value="HMD_C_sf"/>
</dbReference>
<dbReference type="InterPro" id="IPR055205">
    <property type="entry name" value="HMD_N"/>
</dbReference>
<dbReference type="InterPro" id="IPR024190">
    <property type="entry name" value="METHMP_Hmd"/>
</dbReference>
<dbReference type="InterPro" id="IPR036291">
    <property type="entry name" value="NAD(P)-bd_dom_sf"/>
</dbReference>
<dbReference type="NCBIfam" id="TIGR01723">
    <property type="entry name" value="hmd_TIGR"/>
    <property type="match status" value="1"/>
</dbReference>
<dbReference type="Pfam" id="PF03201">
    <property type="entry name" value="HMD"/>
    <property type="match status" value="1"/>
</dbReference>
<dbReference type="Pfam" id="PF22616">
    <property type="entry name" value="HMD_N"/>
    <property type="match status" value="1"/>
</dbReference>
<dbReference type="PIRSF" id="PIRSF016158">
    <property type="entry name" value="HMD"/>
    <property type="match status" value="1"/>
</dbReference>
<dbReference type="PIRSF" id="PIRSF500165">
    <property type="entry name" value="HMDI"/>
    <property type="match status" value="1"/>
</dbReference>
<dbReference type="SUPFAM" id="SSF48179">
    <property type="entry name" value="6-phosphogluconate dehydrogenase C-terminal domain-like"/>
    <property type="match status" value="1"/>
</dbReference>
<dbReference type="SUPFAM" id="SSF51735">
    <property type="entry name" value="NAD(P)-binding Rossmann-fold domains"/>
    <property type="match status" value="1"/>
</dbReference>
<proteinExistence type="evidence at protein level"/>
<name>HMD_METTM</name>
<evidence type="ECO:0000250" key="1">
    <source>
        <dbReference type="UniProtKB" id="Q02394"/>
    </source>
</evidence>
<evidence type="ECO:0000269" key="2">
    <source>
    </source>
</evidence>
<evidence type="ECO:0000269" key="3">
    <source>
    </source>
</evidence>
<evidence type="ECO:0000303" key="4">
    <source>
    </source>
</evidence>
<evidence type="ECO:0000303" key="5">
    <source>
    </source>
</evidence>
<evidence type="ECO:0000305" key="6"/>
<evidence type="ECO:0007829" key="7">
    <source>
        <dbReference type="PDB" id="4JJF"/>
    </source>
</evidence>
<evidence type="ECO:0007829" key="8">
    <source>
        <dbReference type="PDB" id="5OK4"/>
    </source>
</evidence>